<comment type="function">
    <text evidence="1">Specifically methylates the adenine in position 37 of tRNA(1)(Val) (anticodon cmo5UAC).</text>
</comment>
<comment type="catalytic activity">
    <reaction evidence="1">
        <text>adenosine(37) in tRNA1(Val) + S-adenosyl-L-methionine = N(6)-methyladenosine(37) in tRNA1(Val) + S-adenosyl-L-homocysteine + H(+)</text>
        <dbReference type="Rhea" id="RHEA:43160"/>
        <dbReference type="Rhea" id="RHEA-COMP:10369"/>
        <dbReference type="Rhea" id="RHEA-COMP:10370"/>
        <dbReference type="ChEBI" id="CHEBI:15378"/>
        <dbReference type="ChEBI" id="CHEBI:57856"/>
        <dbReference type="ChEBI" id="CHEBI:59789"/>
        <dbReference type="ChEBI" id="CHEBI:74411"/>
        <dbReference type="ChEBI" id="CHEBI:74449"/>
        <dbReference type="EC" id="2.1.1.223"/>
    </reaction>
</comment>
<comment type="subcellular location">
    <subcellularLocation>
        <location evidence="1">Cytoplasm</location>
    </subcellularLocation>
</comment>
<comment type="similarity">
    <text evidence="1">Belongs to the methyltransferase superfamily. tRNA (adenine-N(6)-)-methyltransferase family.</text>
</comment>
<gene>
    <name type="ordered locus">PSHAa0511</name>
</gene>
<organism>
    <name type="scientific">Pseudoalteromonas translucida (strain TAC 125)</name>
    <dbReference type="NCBI Taxonomy" id="326442"/>
    <lineage>
        <taxon>Bacteria</taxon>
        <taxon>Pseudomonadati</taxon>
        <taxon>Pseudomonadota</taxon>
        <taxon>Gammaproteobacteria</taxon>
        <taxon>Alteromonadales</taxon>
        <taxon>Pseudoalteromonadaceae</taxon>
        <taxon>Pseudoalteromonas</taxon>
    </lineage>
</organism>
<dbReference type="EC" id="2.1.1.223" evidence="1"/>
<dbReference type="EMBL" id="CR954246">
    <property type="protein sequence ID" value="CAI85601.1"/>
    <property type="molecule type" value="Genomic_DNA"/>
</dbReference>
<dbReference type="SMR" id="Q3IG80"/>
<dbReference type="STRING" id="326442.PSHAa0511"/>
<dbReference type="KEGG" id="pha:PSHAa0511"/>
<dbReference type="PATRIC" id="fig|326442.8.peg.480"/>
<dbReference type="eggNOG" id="COG4123">
    <property type="taxonomic scope" value="Bacteria"/>
</dbReference>
<dbReference type="HOGENOM" id="CLU_061983_0_0_6"/>
<dbReference type="BioCyc" id="PHAL326442:PSHA_RS02475-MONOMER"/>
<dbReference type="Proteomes" id="UP000006843">
    <property type="component" value="Chromosome I"/>
</dbReference>
<dbReference type="GO" id="GO:0005737">
    <property type="term" value="C:cytoplasm"/>
    <property type="evidence" value="ECO:0007669"/>
    <property type="project" value="UniProtKB-SubCell"/>
</dbReference>
<dbReference type="GO" id="GO:0003676">
    <property type="term" value="F:nucleic acid binding"/>
    <property type="evidence" value="ECO:0007669"/>
    <property type="project" value="InterPro"/>
</dbReference>
<dbReference type="GO" id="GO:0016430">
    <property type="term" value="F:tRNA (adenine-N6)-methyltransferase activity"/>
    <property type="evidence" value="ECO:0007669"/>
    <property type="project" value="UniProtKB-UniRule"/>
</dbReference>
<dbReference type="GO" id="GO:0032259">
    <property type="term" value="P:methylation"/>
    <property type="evidence" value="ECO:0007669"/>
    <property type="project" value="UniProtKB-KW"/>
</dbReference>
<dbReference type="GO" id="GO:0008033">
    <property type="term" value="P:tRNA processing"/>
    <property type="evidence" value="ECO:0007669"/>
    <property type="project" value="UniProtKB-UniRule"/>
</dbReference>
<dbReference type="CDD" id="cd02440">
    <property type="entry name" value="AdoMet_MTases"/>
    <property type="match status" value="1"/>
</dbReference>
<dbReference type="Gene3D" id="3.40.50.150">
    <property type="entry name" value="Vaccinia Virus protein VP39"/>
    <property type="match status" value="1"/>
</dbReference>
<dbReference type="HAMAP" id="MF_01872">
    <property type="entry name" value="tRNA_methyltr_YfiC"/>
    <property type="match status" value="1"/>
</dbReference>
<dbReference type="InterPro" id="IPR002052">
    <property type="entry name" value="DNA_methylase_N6_adenine_CS"/>
</dbReference>
<dbReference type="InterPro" id="IPR029063">
    <property type="entry name" value="SAM-dependent_MTases_sf"/>
</dbReference>
<dbReference type="InterPro" id="IPR007848">
    <property type="entry name" value="Small_mtfrase_dom"/>
</dbReference>
<dbReference type="InterPro" id="IPR050210">
    <property type="entry name" value="tRNA_Adenine-N(6)_MTase"/>
</dbReference>
<dbReference type="InterPro" id="IPR022882">
    <property type="entry name" value="tRNA_adenine-N6_MeTrfase"/>
</dbReference>
<dbReference type="PANTHER" id="PTHR47739">
    <property type="entry name" value="TRNA1(VAL) (ADENINE(37)-N6)-METHYLTRANSFERASE"/>
    <property type="match status" value="1"/>
</dbReference>
<dbReference type="PANTHER" id="PTHR47739:SF1">
    <property type="entry name" value="TRNA1(VAL) (ADENINE(37)-N6)-METHYLTRANSFERASE"/>
    <property type="match status" value="1"/>
</dbReference>
<dbReference type="Pfam" id="PF05175">
    <property type="entry name" value="MTS"/>
    <property type="match status" value="1"/>
</dbReference>
<dbReference type="SUPFAM" id="SSF53335">
    <property type="entry name" value="S-adenosyl-L-methionine-dependent methyltransferases"/>
    <property type="match status" value="1"/>
</dbReference>
<dbReference type="PROSITE" id="PS00092">
    <property type="entry name" value="N6_MTASE"/>
    <property type="match status" value="1"/>
</dbReference>
<protein>
    <recommendedName>
        <fullName evidence="1">tRNA1(Val) (adenine(37)-N6)-methyltransferase</fullName>
        <ecNumber evidence="1">2.1.1.223</ecNumber>
    </recommendedName>
    <alternativeName>
        <fullName evidence="1">tRNA m6A37 methyltransferase</fullName>
    </alternativeName>
</protein>
<proteinExistence type="inferred from homology"/>
<name>TRMN6_PSET1</name>
<feature type="chain" id="PRO_0000387402" description="tRNA1(Val) (adenine(37)-N6)-methyltransferase">
    <location>
        <begin position="1"/>
        <end position="232"/>
    </location>
</feature>
<sequence length="232" mass="25482">MSGFAFKQFKVAHEQCAMKVSTDGILLGAWANLSNANSLLDIGTGTGLLALMCKQRSPQLTITAVEVDKNAYQQALQNIAASPWPNIEVHQQSIQTFNSAQPFDVVIANPPYFNHSLKGNNKARNIARHTDGLSFAELISAFKKLSHAGSTFSLILPTTEVAVFIELATQNGLFLNTHCQVKATPNKAISRSLMTFSYINQSIVESALCIKDNENNYSEDYIALCKAFYLKM</sequence>
<accession>Q3IG80</accession>
<reference key="1">
    <citation type="journal article" date="2005" name="Genome Res.">
        <title>Coping with cold: the genome of the versatile marine Antarctica bacterium Pseudoalteromonas haloplanktis TAC125.</title>
        <authorList>
            <person name="Medigue C."/>
            <person name="Krin E."/>
            <person name="Pascal G."/>
            <person name="Barbe V."/>
            <person name="Bernsel A."/>
            <person name="Bertin P.N."/>
            <person name="Cheung F."/>
            <person name="Cruveiller S."/>
            <person name="D'Amico S."/>
            <person name="Duilio A."/>
            <person name="Fang G."/>
            <person name="Feller G."/>
            <person name="Ho C."/>
            <person name="Mangenot S."/>
            <person name="Marino G."/>
            <person name="Nilsson J."/>
            <person name="Parrilli E."/>
            <person name="Rocha E.P.C."/>
            <person name="Rouy Z."/>
            <person name="Sekowska A."/>
            <person name="Tutino M.L."/>
            <person name="Vallenet D."/>
            <person name="von Heijne G."/>
            <person name="Danchin A."/>
        </authorList>
    </citation>
    <scope>NUCLEOTIDE SEQUENCE [LARGE SCALE GENOMIC DNA]</scope>
    <source>
        <strain>TAC 125</strain>
    </source>
</reference>
<evidence type="ECO:0000255" key="1">
    <source>
        <dbReference type="HAMAP-Rule" id="MF_01872"/>
    </source>
</evidence>
<keyword id="KW-0963">Cytoplasm</keyword>
<keyword id="KW-0489">Methyltransferase</keyword>
<keyword id="KW-1185">Reference proteome</keyword>
<keyword id="KW-0949">S-adenosyl-L-methionine</keyword>
<keyword id="KW-0808">Transferase</keyword>
<keyword id="KW-0819">tRNA processing</keyword>